<sequence length="160" mass="17712">MSDSERTVDIQVVPPYAAYVDSALIEQAVECTLQMEQVAGPVEVGILITDDAGLQRLNQAYRGVDAPTDVLSFAEADDDSAFVRPPDAPRYLGDIAISWERVVAQAAEYGHSRERELAFLVVHGMLHLLGYDHERSPADEADMRAREEEILRALGLSREE</sequence>
<protein>
    <recommendedName>
        <fullName evidence="1">Endoribonuclease YbeY</fullName>
        <ecNumber evidence="1">3.1.-.-</ecNumber>
    </recommendedName>
</protein>
<accession>A5UZ98</accession>
<reference key="1">
    <citation type="submission" date="2007-04" db="EMBL/GenBank/DDBJ databases">
        <title>Complete sequence of Roseiflexus sp. RS-1.</title>
        <authorList>
            <consortium name="US DOE Joint Genome Institute"/>
            <person name="Copeland A."/>
            <person name="Lucas S."/>
            <person name="Lapidus A."/>
            <person name="Barry K."/>
            <person name="Detter J.C."/>
            <person name="Glavina del Rio T."/>
            <person name="Hammon N."/>
            <person name="Israni S."/>
            <person name="Dalin E."/>
            <person name="Tice H."/>
            <person name="Pitluck S."/>
            <person name="Chertkov O."/>
            <person name="Brettin T."/>
            <person name="Bruce D."/>
            <person name="Han C."/>
            <person name="Schmutz J."/>
            <person name="Larimer F."/>
            <person name="Land M."/>
            <person name="Hauser L."/>
            <person name="Kyrpides N."/>
            <person name="Mikhailova N."/>
            <person name="Bryant D.A."/>
            <person name="Richardson P."/>
        </authorList>
    </citation>
    <scope>NUCLEOTIDE SEQUENCE [LARGE SCALE GENOMIC DNA]</scope>
    <source>
        <strain>RS-1</strain>
    </source>
</reference>
<organism>
    <name type="scientific">Roseiflexus sp. (strain RS-1)</name>
    <dbReference type="NCBI Taxonomy" id="357808"/>
    <lineage>
        <taxon>Bacteria</taxon>
        <taxon>Bacillati</taxon>
        <taxon>Chloroflexota</taxon>
        <taxon>Chloroflexia</taxon>
        <taxon>Chloroflexales</taxon>
        <taxon>Roseiflexineae</taxon>
        <taxon>Roseiflexaceae</taxon>
        <taxon>Roseiflexus</taxon>
    </lineage>
</organism>
<feature type="chain" id="PRO_0000321783" description="Endoribonuclease YbeY">
    <location>
        <begin position="1"/>
        <end position="160"/>
    </location>
</feature>
<feature type="binding site" evidence="1">
    <location>
        <position position="123"/>
    </location>
    <ligand>
        <name>Zn(2+)</name>
        <dbReference type="ChEBI" id="CHEBI:29105"/>
        <note>catalytic</note>
    </ligand>
</feature>
<feature type="binding site" evidence="1">
    <location>
        <position position="127"/>
    </location>
    <ligand>
        <name>Zn(2+)</name>
        <dbReference type="ChEBI" id="CHEBI:29105"/>
        <note>catalytic</note>
    </ligand>
</feature>
<feature type="binding site" evidence="1">
    <location>
        <position position="133"/>
    </location>
    <ligand>
        <name>Zn(2+)</name>
        <dbReference type="ChEBI" id="CHEBI:29105"/>
        <note>catalytic</note>
    </ligand>
</feature>
<proteinExistence type="inferred from homology"/>
<name>YBEY_ROSS1</name>
<keyword id="KW-0963">Cytoplasm</keyword>
<keyword id="KW-0255">Endonuclease</keyword>
<keyword id="KW-0378">Hydrolase</keyword>
<keyword id="KW-0479">Metal-binding</keyword>
<keyword id="KW-0540">Nuclease</keyword>
<keyword id="KW-0690">Ribosome biogenesis</keyword>
<keyword id="KW-0698">rRNA processing</keyword>
<keyword id="KW-0862">Zinc</keyword>
<comment type="function">
    <text evidence="1">Single strand-specific metallo-endoribonuclease involved in late-stage 70S ribosome quality control and in maturation of the 3' terminus of the 16S rRNA.</text>
</comment>
<comment type="cofactor">
    <cofactor evidence="1">
        <name>Zn(2+)</name>
        <dbReference type="ChEBI" id="CHEBI:29105"/>
    </cofactor>
    <text evidence="1">Binds 1 zinc ion.</text>
</comment>
<comment type="subcellular location">
    <subcellularLocation>
        <location evidence="1">Cytoplasm</location>
    </subcellularLocation>
</comment>
<comment type="similarity">
    <text evidence="1">Belongs to the endoribonuclease YbeY family.</text>
</comment>
<evidence type="ECO:0000255" key="1">
    <source>
        <dbReference type="HAMAP-Rule" id="MF_00009"/>
    </source>
</evidence>
<gene>
    <name evidence="1" type="primary">ybeY</name>
    <name type="ordered locus">RoseRS_3596</name>
</gene>
<dbReference type="EC" id="3.1.-.-" evidence="1"/>
<dbReference type="EMBL" id="CP000686">
    <property type="protein sequence ID" value="ABQ91951.1"/>
    <property type="molecule type" value="Genomic_DNA"/>
</dbReference>
<dbReference type="RefSeq" id="WP_011958293.1">
    <property type="nucleotide sequence ID" value="NC_009523.1"/>
</dbReference>
<dbReference type="SMR" id="A5UZ98"/>
<dbReference type="STRING" id="357808.RoseRS_3596"/>
<dbReference type="KEGG" id="rrs:RoseRS_3596"/>
<dbReference type="eggNOG" id="COG0319">
    <property type="taxonomic scope" value="Bacteria"/>
</dbReference>
<dbReference type="HOGENOM" id="CLU_106710_3_0_0"/>
<dbReference type="OrthoDB" id="9807740at2"/>
<dbReference type="Proteomes" id="UP000006554">
    <property type="component" value="Chromosome"/>
</dbReference>
<dbReference type="GO" id="GO:0005737">
    <property type="term" value="C:cytoplasm"/>
    <property type="evidence" value="ECO:0007669"/>
    <property type="project" value="UniProtKB-SubCell"/>
</dbReference>
<dbReference type="GO" id="GO:0004222">
    <property type="term" value="F:metalloendopeptidase activity"/>
    <property type="evidence" value="ECO:0007669"/>
    <property type="project" value="InterPro"/>
</dbReference>
<dbReference type="GO" id="GO:0004521">
    <property type="term" value="F:RNA endonuclease activity"/>
    <property type="evidence" value="ECO:0007669"/>
    <property type="project" value="UniProtKB-UniRule"/>
</dbReference>
<dbReference type="GO" id="GO:0008270">
    <property type="term" value="F:zinc ion binding"/>
    <property type="evidence" value="ECO:0007669"/>
    <property type="project" value="UniProtKB-UniRule"/>
</dbReference>
<dbReference type="GO" id="GO:0006364">
    <property type="term" value="P:rRNA processing"/>
    <property type="evidence" value="ECO:0007669"/>
    <property type="project" value="UniProtKB-UniRule"/>
</dbReference>
<dbReference type="Gene3D" id="3.40.390.30">
    <property type="entry name" value="Metalloproteases ('zincins'), catalytic domain"/>
    <property type="match status" value="1"/>
</dbReference>
<dbReference type="HAMAP" id="MF_00009">
    <property type="entry name" value="Endoribonucl_YbeY"/>
    <property type="match status" value="1"/>
</dbReference>
<dbReference type="InterPro" id="IPR023091">
    <property type="entry name" value="MetalPrtase_cat_dom_sf_prd"/>
</dbReference>
<dbReference type="InterPro" id="IPR002036">
    <property type="entry name" value="YbeY"/>
</dbReference>
<dbReference type="InterPro" id="IPR020549">
    <property type="entry name" value="YbeY_CS"/>
</dbReference>
<dbReference type="NCBIfam" id="TIGR00043">
    <property type="entry name" value="rRNA maturation RNase YbeY"/>
    <property type="match status" value="1"/>
</dbReference>
<dbReference type="PANTHER" id="PTHR46986">
    <property type="entry name" value="ENDORIBONUCLEASE YBEY, CHLOROPLASTIC"/>
    <property type="match status" value="1"/>
</dbReference>
<dbReference type="PANTHER" id="PTHR46986:SF1">
    <property type="entry name" value="ENDORIBONUCLEASE YBEY, CHLOROPLASTIC"/>
    <property type="match status" value="1"/>
</dbReference>
<dbReference type="Pfam" id="PF02130">
    <property type="entry name" value="YbeY"/>
    <property type="match status" value="1"/>
</dbReference>
<dbReference type="SUPFAM" id="SSF55486">
    <property type="entry name" value="Metalloproteases ('zincins'), catalytic domain"/>
    <property type="match status" value="1"/>
</dbReference>
<dbReference type="PROSITE" id="PS01306">
    <property type="entry name" value="UPF0054"/>
    <property type="match status" value="1"/>
</dbReference>